<reference key="1">
    <citation type="journal article" date="2001" name="Mol. Gen. Genet.">
        <title>The foldase CYPB is a component of the secretory pathway of Aspergillus niger and contains the endoplasmic reticulum retention signal HEEL.</title>
        <authorList>
            <person name="Derkx P.M.F."/>
            <person name="Madrid S.M."/>
        </authorList>
    </citation>
    <scope>NUCLEOTIDE SEQUENCE [GENOMIC DNA]</scope>
    <scope>FUNCTION</scope>
    <scope>CATALYTIC ACTIVITY</scope>
</reference>
<organism>
    <name type="scientific">Aspergillus niger</name>
    <dbReference type="NCBI Taxonomy" id="5061"/>
    <lineage>
        <taxon>Eukaryota</taxon>
        <taxon>Fungi</taxon>
        <taxon>Dikarya</taxon>
        <taxon>Ascomycota</taxon>
        <taxon>Pezizomycotina</taxon>
        <taxon>Eurotiomycetes</taxon>
        <taxon>Eurotiomycetidae</taxon>
        <taxon>Eurotiales</taxon>
        <taxon>Aspergillaceae</taxon>
        <taxon>Aspergillus</taxon>
        <taxon>Aspergillus subgen. Circumdati</taxon>
    </lineage>
</organism>
<accession>Q8X166</accession>
<evidence type="ECO:0000250" key="1"/>
<evidence type="ECO:0000255" key="2"/>
<evidence type="ECO:0000255" key="3">
    <source>
        <dbReference type="PROSITE-ProRule" id="PRU00156"/>
    </source>
</evidence>
<evidence type="ECO:0000255" key="4">
    <source>
        <dbReference type="PROSITE-ProRule" id="PRU10138"/>
    </source>
</evidence>
<evidence type="ECO:0000256" key="5">
    <source>
        <dbReference type="SAM" id="MobiDB-lite"/>
    </source>
</evidence>
<evidence type="ECO:0000269" key="6">
    <source>
    </source>
</evidence>
<evidence type="ECO:0000305" key="7"/>
<gene>
    <name type="primary">cypB</name>
</gene>
<comment type="function">
    <text evidence="6">PPIases accelerate the folding of proteins. It catalyzes the cis-trans isomerization of proline imidic peptide bonds in oligopeptides.</text>
</comment>
<comment type="catalytic activity">
    <reaction evidence="6">
        <text>[protein]-peptidylproline (omega=180) = [protein]-peptidylproline (omega=0)</text>
        <dbReference type="Rhea" id="RHEA:16237"/>
        <dbReference type="Rhea" id="RHEA-COMP:10747"/>
        <dbReference type="Rhea" id="RHEA-COMP:10748"/>
        <dbReference type="ChEBI" id="CHEBI:83833"/>
        <dbReference type="ChEBI" id="CHEBI:83834"/>
        <dbReference type="EC" id="5.2.1.8"/>
    </reaction>
</comment>
<comment type="activity regulation">
    <text evidence="1">Inhibited by cyclosporin A (CsA).</text>
</comment>
<comment type="subcellular location">
    <subcellularLocation>
        <location evidence="4">Endoplasmic reticulum lumen</location>
    </subcellularLocation>
</comment>
<comment type="similarity">
    <text evidence="7">Belongs to the cyclophilin-type PPIase family. PPIase B subfamily.</text>
</comment>
<dbReference type="EC" id="5.2.1.8" evidence="6"/>
<dbReference type="EMBL" id="AY005867">
    <property type="protein sequence ID" value="AAF98447.1"/>
    <property type="molecule type" value="Genomic_DNA"/>
</dbReference>
<dbReference type="SMR" id="Q8X166"/>
<dbReference type="GlyCosmos" id="Q8X166">
    <property type="glycosylation" value="1 site, No reported glycans"/>
</dbReference>
<dbReference type="PaxDb" id="5061-CADANGAP00003825"/>
<dbReference type="VEuPathDB" id="FungiDB:An04g02020"/>
<dbReference type="VEuPathDB" id="FungiDB:ASPNIDRAFT2_1126047"/>
<dbReference type="VEuPathDB" id="FungiDB:ATCC64974_78060"/>
<dbReference type="VEuPathDB" id="FungiDB:M747DRAFT_330957"/>
<dbReference type="eggNOG" id="KOG0880">
    <property type="taxonomic scope" value="Eukaryota"/>
</dbReference>
<dbReference type="OrthoDB" id="193499at2759"/>
<dbReference type="GO" id="GO:0005788">
    <property type="term" value="C:endoplasmic reticulum lumen"/>
    <property type="evidence" value="ECO:0007669"/>
    <property type="project" value="UniProtKB-SubCell"/>
</dbReference>
<dbReference type="GO" id="GO:0000324">
    <property type="term" value="C:fungal-type vacuole"/>
    <property type="evidence" value="ECO:0007669"/>
    <property type="project" value="TreeGrafter"/>
</dbReference>
<dbReference type="GO" id="GO:0016018">
    <property type="term" value="F:cyclosporin A binding"/>
    <property type="evidence" value="ECO:0007669"/>
    <property type="project" value="TreeGrafter"/>
</dbReference>
<dbReference type="GO" id="GO:0003755">
    <property type="term" value="F:peptidyl-prolyl cis-trans isomerase activity"/>
    <property type="evidence" value="ECO:0000314"/>
    <property type="project" value="AspGD"/>
</dbReference>
<dbReference type="GO" id="GO:0006457">
    <property type="term" value="P:protein folding"/>
    <property type="evidence" value="ECO:0007669"/>
    <property type="project" value="InterPro"/>
</dbReference>
<dbReference type="CDD" id="cd01926">
    <property type="entry name" value="cyclophilin_ABH_like"/>
    <property type="match status" value="1"/>
</dbReference>
<dbReference type="FunFam" id="2.40.100.10:FF:000001">
    <property type="entry name" value="Peptidyl-prolyl cis-trans isomerase"/>
    <property type="match status" value="1"/>
</dbReference>
<dbReference type="Gene3D" id="2.40.100.10">
    <property type="entry name" value="Cyclophilin-like"/>
    <property type="match status" value="1"/>
</dbReference>
<dbReference type="InterPro" id="IPR029000">
    <property type="entry name" value="Cyclophilin-like_dom_sf"/>
</dbReference>
<dbReference type="InterPro" id="IPR020892">
    <property type="entry name" value="Cyclophilin-type_PPIase_CS"/>
</dbReference>
<dbReference type="InterPro" id="IPR002130">
    <property type="entry name" value="Cyclophilin-type_PPIase_dom"/>
</dbReference>
<dbReference type="PANTHER" id="PTHR11071">
    <property type="entry name" value="PEPTIDYL-PROLYL CIS-TRANS ISOMERASE"/>
    <property type="match status" value="1"/>
</dbReference>
<dbReference type="PANTHER" id="PTHR11071:SF561">
    <property type="entry name" value="PEPTIDYL-PROLYL CIS-TRANS ISOMERASE D-RELATED"/>
    <property type="match status" value="1"/>
</dbReference>
<dbReference type="Pfam" id="PF00160">
    <property type="entry name" value="Pro_isomerase"/>
    <property type="match status" value="1"/>
</dbReference>
<dbReference type="PRINTS" id="PR00153">
    <property type="entry name" value="CSAPPISMRASE"/>
</dbReference>
<dbReference type="SUPFAM" id="SSF50891">
    <property type="entry name" value="Cyclophilin-like"/>
    <property type="match status" value="1"/>
</dbReference>
<dbReference type="PROSITE" id="PS00170">
    <property type="entry name" value="CSA_PPIASE_1"/>
    <property type="match status" value="1"/>
</dbReference>
<dbReference type="PROSITE" id="PS50072">
    <property type="entry name" value="CSA_PPIASE_2"/>
    <property type="match status" value="1"/>
</dbReference>
<dbReference type="PROSITE" id="PS00014">
    <property type="entry name" value="ER_TARGET"/>
    <property type="match status" value="1"/>
</dbReference>
<feature type="signal peptide" evidence="2">
    <location>
        <begin position="1"/>
        <end position="23"/>
    </location>
</feature>
<feature type="chain" id="PRO_0000233044" description="Peptidyl-prolyl cis-trans isomerase B">
    <location>
        <begin position="24"/>
        <end position="212"/>
    </location>
</feature>
<feature type="domain" description="PPIase cyclophilin-type" evidence="3">
    <location>
        <begin position="38"/>
        <end position="195"/>
    </location>
</feature>
<feature type="region of interest" description="Disordered" evidence="5">
    <location>
        <begin position="181"/>
        <end position="212"/>
    </location>
</feature>
<feature type="short sequence motif" description="Prevents secretion from ER">
    <location>
        <begin position="209"/>
        <end position="212"/>
    </location>
</feature>
<feature type="compositionally biased region" description="Basic and acidic residues" evidence="5">
    <location>
        <begin position="192"/>
        <end position="212"/>
    </location>
</feature>
<feature type="glycosylation site" description="N-linked (GlcNAc...) asparagine" evidence="2">
    <location>
        <position position="139"/>
    </location>
</feature>
<protein>
    <recommendedName>
        <fullName>Peptidyl-prolyl cis-trans isomerase B</fullName>
        <shortName>PPIase B</shortName>
        <ecNumber evidence="6">5.2.1.8</ecNumber>
    </recommendedName>
    <alternativeName>
        <fullName>Rotamase B</fullName>
    </alternativeName>
</protein>
<sequence>MNFKNIFLSFFFVLAVGLALVHAEDAQPRGPKITSKVFFDIEHGDKPLGRVVLGLYGKTVPKTAENFRALATGEKGFGYEGSTFHRVIKDFMIQGGDFTRGDGTGGKSIYGEKFADENFKLRHTRKGLLSMANAGKDTNGSQFFITTVPTPWLDGRHVVFGEVLEGYEIVAQIENVPKGRSDRPVETVKIVKSGELESEDKAGEKGSSHEEL</sequence>
<keyword id="KW-0256">Endoplasmic reticulum</keyword>
<keyword id="KW-0325">Glycoprotein</keyword>
<keyword id="KW-0413">Isomerase</keyword>
<keyword id="KW-0697">Rotamase</keyword>
<keyword id="KW-0732">Signal</keyword>
<proteinExistence type="evidence at protein level"/>
<name>PPIB_ASPNG</name>